<protein>
    <recommendedName>
        <fullName evidence="1">DNA-directed RNA polymerase subunit alpha</fullName>
        <shortName evidence="1">RNAP subunit alpha</shortName>
        <ecNumber evidence="1">2.7.7.6</ecNumber>
    </recommendedName>
    <alternativeName>
        <fullName evidence="1">RNA polymerase subunit alpha</fullName>
    </alternativeName>
    <alternativeName>
        <fullName evidence="1">Transcriptase subunit alpha</fullName>
    </alternativeName>
</protein>
<name>RPOA_STAAE</name>
<organism>
    <name type="scientific">Staphylococcus aureus (strain Newman)</name>
    <dbReference type="NCBI Taxonomy" id="426430"/>
    <lineage>
        <taxon>Bacteria</taxon>
        <taxon>Bacillati</taxon>
        <taxon>Bacillota</taxon>
        <taxon>Bacilli</taxon>
        <taxon>Bacillales</taxon>
        <taxon>Staphylococcaceae</taxon>
        <taxon>Staphylococcus</taxon>
    </lineage>
</organism>
<proteinExistence type="inferred from homology"/>
<evidence type="ECO:0000255" key="1">
    <source>
        <dbReference type="HAMAP-Rule" id="MF_00059"/>
    </source>
</evidence>
<sequence>MIEIEKPRIETIEISEDAKFGKFVVEPLERGYGTTLGNSLRRILLSSLPGAAVKYIEIEGVLHEFSAVDNVVEDVSTIIMNIKQLALKIYSEEDKTLEIDVRDEGEVTASDITHDSDVEILNPELKIATVSKGGHLKIRLVANKGRGYALAEQNNTSDLPIGVIPVDSLYSPVERVNYTVENTRVGQSSDFDKLTLDVWTNGSITPQESVSLAAKIMTEHLNIFVGLTDEAQNAEIMIEKEEDQKEKVLEMSIEELDLSVRSYNCLKRAGINSVQELADKSEADMMKVRNLGRKSLEEVKYKLEDLGLGLRKED</sequence>
<reference key="1">
    <citation type="journal article" date="2008" name="J. Bacteriol.">
        <title>Genome sequence of Staphylococcus aureus strain Newman and comparative analysis of staphylococcal genomes: polymorphism and evolution of two major pathogenicity islands.</title>
        <authorList>
            <person name="Baba T."/>
            <person name="Bae T."/>
            <person name="Schneewind O."/>
            <person name="Takeuchi F."/>
            <person name="Hiramatsu K."/>
        </authorList>
    </citation>
    <scope>NUCLEOTIDE SEQUENCE [LARGE SCALE GENOMIC DNA]</scope>
    <source>
        <strain>Newman</strain>
    </source>
</reference>
<gene>
    <name evidence="1" type="primary">rpoA</name>
    <name type="ordered locus">NWMN_2126</name>
</gene>
<keyword id="KW-0240">DNA-directed RNA polymerase</keyword>
<keyword id="KW-0548">Nucleotidyltransferase</keyword>
<keyword id="KW-0804">Transcription</keyword>
<keyword id="KW-0808">Transferase</keyword>
<comment type="function">
    <text evidence="1">DNA-dependent RNA polymerase catalyzes the transcription of DNA into RNA using the four ribonucleoside triphosphates as substrates.</text>
</comment>
<comment type="catalytic activity">
    <reaction evidence="1">
        <text>RNA(n) + a ribonucleoside 5'-triphosphate = RNA(n+1) + diphosphate</text>
        <dbReference type="Rhea" id="RHEA:21248"/>
        <dbReference type="Rhea" id="RHEA-COMP:14527"/>
        <dbReference type="Rhea" id="RHEA-COMP:17342"/>
        <dbReference type="ChEBI" id="CHEBI:33019"/>
        <dbReference type="ChEBI" id="CHEBI:61557"/>
        <dbReference type="ChEBI" id="CHEBI:140395"/>
        <dbReference type="EC" id="2.7.7.6"/>
    </reaction>
</comment>
<comment type="subunit">
    <text evidence="1">Homodimer. The RNAP catalytic core consists of 2 alpha, 1 beta, 1 beta' and 1 omega subunit. When a sigma factor is associated with the core the holoenzyme is formed, which can initiate transcription.</text>
</comment>
<comment type="domain">
    <text evidence="1">The N-terminal domain is essential for RNAP assembly and basal transcription, whereas the C-terminal domain is involved in interaction with transcriptional regulators and with upstream promoter elements.</text>
</comment>
<comment type="similarity">
    <text evidence="1">Belongs to the RNA polymerase alpha chain family.</text>
</comment>
<accession>A6QJ66</accession>
<dbReference type="EC" id="2.7.7.6" evidence="1"/>
<dbReference type="EMBL" id="AP009351">
    <property type="protein sequence ID" value="BAF68398.1"/>
    <property type="molecule type" value="Genomic_DNA"/>
</dbReference>
<dbReference type="RefSeq" id="WP_000569649.1">
    <property type="nucleotide sequence ID" value="NZ_JBBIAE010000006.1"/>
</dbReference>
<dbReference type="SMR" id="A6QJ66"/>
<dbReference type="KEGG" id="sae:NWMN_2126"/>
<dbReference type="HOGENOM" id="CLU_053084_0_1_9"/>
<dbReference type="Proteomes" id="UP000006386">
    <property type="component" value="Chromosome"/>
</dbReference>
<dbReference type="GO" id="GO:0005737">
    <property type="term" value="C:cytoplasm"/>
    <property type="evidence" value="ECO:0007669"/>
    <property type="project" value="UniProtKB-ARBA"/>
</dbReference>
<dbReference type="GO" id="GO:0000428">
    <property type="term" value="C:DNA-directed RNA polymerase complex"/>
    <property type="evidence" value="ECO:0007669"/>
    <property type="project" value="UniProtKB-KW"/>
</dbReference>
<dbReference type="GO" id="GO:0003677">
    <property type="term" value="F:DNA binding"/>
    <property type="evidence" value="ECO:0007669"/>
    <property type="project" value="UniProtKB-UniRule"/>
</dbReference>
<dbReference type="GO" id="GO:0003899">
    <property type="term" value="F:DNA-directed RNA polymerase activity"/>
    <property type="evidence" value="ECO:0007669"/>
    <property type="project" value="UniProtKB-UniRule"/>
</dbReference>
<dbReference type="GO" id="GO:0046983">
    <property type="term" value="F:protein dimerization activity"/>
    <property type="evidence" value="ECO:0007669"/>
    <property type="project" value="InterPro"/>
</dbReference>
<dbReference type="GO" id="GO:0006351">
    <property type="term" value="P:DNA-templated transcription"/>
    <property type="evidence" value="ECO:0007669"/>
    <property type="project" value="UniProtKB-UniRule"/>
</dbReference>
<dbReference type="CDD" id="cd06928">
    <property type="entry name" value="RNAP_alpha_NTD"/>
    <property type="match status" value="1"/>
</dbReference>
<dbReference type="FunFam" id="1.10.150.20:FF:000001">
    <property type="entry name" value="DNA-directed RNA polymerase subunit alpha"/>
    <property type="match status" value="1"/>
</dbReference>
<dbReference type="FunFam" id="2.170.120.12:FF:000001">
    <property type="entry name" value="DNA-directed RNA polymerase subunit alpha"/>
    <property type="match status" value="1"/>
</dbReference>
<dbReference type="Gene3D" id="1.10.150.20">
    <property type="entry name" value="5' to 3' exonuclease, C-terminal subdomain"/>
    <property type="match status" value="1"/>
</dbReference>
<dbReference type="Gene3D" id="2.170.120.12">
    <property type="entry name" value="DNA-directed RNA polymerase, insert domain"/>
    <property type="match status" value="1"/>
</dbReference>
<dbReference type="Gene3D" id="3.30.1360.10">
    <property type="entry name" value="RNA polymerase, RBP11-like subunit"/>
    <property type="match status" value="1"/>
</dbReference>
<dbReference type="HAMAP" id="MF_00059">
    <property type="entry name" value="RNApol_bact_RpoA"/>
    <property type="match status" value="1"/>
</dbReference>
<dbReference type="InterPro" id="IPR011262">
    <property type="entry name" value="DNA-dir_RNA_pol_insert"/>
</dbReference>
<dbReference type="InterPro" id="IPR011263">
    <property type="entry name" value="DNA-dir_RNA_pol_RpoA/D/Rpb3"/>
</dbReference>
<dbReference type="InterPro" id="IPR011773">
    <property type="entry name" value="DNA-dir_RpoA"/>
</dbReference>
<dbReference type="InterPro" id="IPR036603">
    <property type="entry name" value="RBP11-like"/>
</dbReference>
<dbReference type="InterPro" id="IPR011260">
    <property type="entry name" value="RNAP_asu_C"/>
</dbReference>
<dbReference type="InterPro" id="IPR036643">
    <property type="entry name" value="RNApol_insert_sf"/>
</dbReference>
<dbReference type="NCBIfam" id="NF003513">
    <property type="entry name" value="PRK05182.1-2"/>
    <property type="match status" value="1"/>
</dbReference>
<dbReference type="NCBIfam" id="NF003515">
    <property type="entry name" value="PRK05182.2-1"/>
    <property type="match status" value="1"/>
</dbReference>
<dbReference type="NCBIfam" id="NF003519">
    <property type="entry name" value="PRK05182.2-5"/>
    <property type="match status" value="1"/>
</dbReference>
<dbReference type="NCBIfam" id="TIGR02027">
    <property type="entry name" value="rpoA"/>
    <property type="match status" value="1"/>
</dbReference>
<dbReference type="Pfam" id="PF01000">
    <property type="entry name" value="RNA_pol_A_bac"/>
    <property type="match status" value="1"/>
</dbReference>
<dbReference type="Pfam" id="PF03118">
    <property type="entry name" value="RNA_pol_A_CTD"/>
    <property type="match status" value="1"/>
</dbReference>
<dbReference type="Pfam" id="PF01193">
    <property type="entry name" value="RNA_pol_L"/>
    <property type="match status" value="1"/>
</dbReference>
<dbReference type="SMART" id="SM00662">
    <property type="entry name" value="RPOLD"/>
    <property type="match status" value="1"/>
</dbReference>
<dbReference type="SUPFAM" id="SSF47789">
    <property type="entry name" value="C-terminal domain of RNA polymerase alpha subunit"/>
    <property type="match status" value="1"/>
</dbReference>
<dbReference type="SUPFAM" id="SSF56553">
    <property type="entry name" value="Insert subdomain of RNA polymerase alpha subunit"/>
    <property type="match status" value="1"/>
</dbReference>
<dbReference type="SUPFAM" id="SSF55257">
    <property type="entry name" value="RBP11-like subunits of RNA polymerase"/>
    <property type="match status" value="1"/>
</dbReference>
<feature type="chain" id="PRO_0000323656" description="DNA-directed RNA polymerase subunit alpha">
    <location>
        <begin position="1"/>
        <end position="314"/>
    </location>
</feature>
<feature type="region of interest" description="Alpha N-terminal domain (alpha-NTD)" evidence="1">
    <location>
        <begin position="1"/>
        <end position="228"/>
    </location>
</feature>
<feature type="region of interest" description="Alpha C-terminal domain (alpha-CTD)" evidence="1">
    <location>
        <begin position="246"/>
        <end position="314"/>
    </location>
</feature>